<reference key="1">
    <citation type="submission" date="2007-05" db="EMBL/GenBank/DDBJ databases">
        <title>Complete sequence of Geobacter uraniireducens Rf4.</title>
        <authorList>
            <consortium name="US DOE Joint Genome Institute"/>
            <person name="Copeland A."/>
            <person name="Lucas S."/>
            <person name="Lapidus A."/>
            <person name="Barry K."/>
            <person name="Detter J.C."/>
            <person name="Glavina del Rio T."/>
            <person name="Hammon N."/>
            <person name="Israni S."/>
            <person name="Dalin E."/>
            <person name="Tice H."/>
            <person name="Pitluck S."/>
            <person name="Chertkov O."/>
            <person name="Brettin T."/>
            <person name="Bruce D."/>
            <person name="Han C."/>
            <person name="Schmutz J."/>
            <person name="Larimer F."/>
            <person name="Land M."/>
            <person name="Hauser L."/>
            <person name="Kyrpides N."/>
            <person name="Mikhailova N."/>
            <person name="Shelobolina E."/>
            <person name="Aklujkar M."/>
            <person name="Lovley D."/>
            <person name="Richardson P."/>
        </authorList>
    </citation>
    <scope>NUCLEOTIDE SEQUENCE [LARGE SCALE GENOMIC DNA]</scope>
    <source>
        <strain>ATCC BAA-1134 / JCM 13001 / Rf4</strain>
    </source>
</reference>
<comment type="catalytic activity">
    <reaction evidence="1">
        <text>L-citrulline + L-aspartate + ATP = 2-(N(omega)-L-arginino)succinate + AMP + diphosphate + H(+)</text>
        <dbReference type="Rhea" id="RHEA:10932"/>
        <dbReference type="ChEBI" id="CHEBI:15378"/>
        <dbReference type="ChEBI" id="CHEBI:29991"/>
        <dbReference type="ChEBI" id="CHEBI:30616"/>
        <dbReference type="ChEBI" id="CHEBI:33019"/>
        <dbReference type="ChEBI" id="CHEBI:57472"/>
        <dbReference type="ChEBI" id="CHEBI:57743"/>
        <dbReference type="ChEBI" id="CHEBI:456215"/>
        <dbReference type="EC" id="6.3.4.5"/>
    </reaction>
</comment>
<comment type="pathway">
    <text evidence="1">Amino-acid biosynthesis; L-arginine biosynthesis; L-arginine from L-ornithine and carbamoyl phosphate: step 2/3.</text>
</comment>
<comment type="subunit">
    <text evidence="1">Homotetramer.</text>
</comment>
<comment type="subcellular location">
    <subcellularLocation>
        <location evidence="1">Cytoplasm</location>
    </subcellularLocation>
</comment>
<comment type="similarity">
    <text evidence="1">Belongs to the argininosuccinate synthase family. Type 1 subfamily.</text>
</comment>
<accession>A5GDA4</accession>
<feature type="chain" id="PRO_0000329470" description="Argininosuccinate synthase">
    <location>
        <begin position="1"/>
        <end position="406"/>
    </location>
</feature>
<feature type="binding site" evidence="1">
    <location>
        <begin position="12"/>
        <end position="20"/>
    </location>
    <ligand>
        <name>ATP</name>
        <dbReference type="ChEBI" id="CHEBI:30616"/>
    </ligand>
</feature>
<feature type="binding site" evidence="1">
    <location>
        <position position="39"/>
    </location>
    <ligand>
        <name>ATP</name>
        <dbReference type="ChEBI" id="CHEBI:30616"/>
    </ligand>
</feature>
<feature type="binding site" evidence="1">
    <location>
        <position position="90"/>
    </location>
    <ligand>
        <name>L-citrulline</name>
        <dbReference type="ChEBI" id="CHEBI:57743"/>
    </ligand>
</feature>
<feature type="binding site" evidence="1">
    <location>
        <position position="95"/>
    </location>
    <ligand>
        <name>L-citrulline</name>
        <dbReference type="ChEBI" id="CHEBI:57743"/>
    </ligand>
</feature>
<feature type="binding site" evidence="1">
    <location>
        <position position="120"/>
    </location>
    <ligand>
        <name>ATP</name>
        <dbReference type="ChEBI" id="CHEBI:30616"/>
    </ligand>
</feature>
<feature type="binding site" evidence="1">
    <location>
        <position position="122"/>
    </location>
    <ligand>
        <name>L-aspartate</name>
        <dbReference type="ChEBI" id="CHEBI:29991"/>
    </ligand>
</feature>
<feature type="binding site" evidence="1">
    <location>
        <position position="126"/>
    </location>
    <ligand>
        <name>L-aspartate</name>
        <dbReference type="ChEBI" id="CHEBI:29991"/>
    </ligand>
</feature>
<feature type="binding site" evidence="1">
    <location>
        <position position="126"/>
    </location>
    <ligand>
        <name>L-citrulline</name>
        <dbReference type="ChEBI" id="CHEBI:57743"/>
    </ligand>
</feature>
<feature type="binding site" evidence="1">
    <location>
        <position position="127"/>
    </location>
    <ligand>
        <name>L-aspartate</name>
        <dbReference type="ChEBI" id="CHEBI:29991"/>
    </ligand>
</feature>
<feature type="binding site" evidence="1">
    <location>
        <position position="130"/>
    </location>
    <ligand>
        <name>L-citrulline</name>
        <dbReference type="ChEBI" id="CHEBI:57743"/>
    </ligand>
</feature>
<feature type="binding site" evidence="1">
    <location>
        <position position="179"/>
    </location>
    <ligand>
        <name>L-citrulline</name>
        <dbReference type="ChEBI" id="CHEBI:57743"/>
    </ligand>
</feature>
<feature type="binding site" evidence="1">
    <location>
        <position position="188"/>
    </location>
    <ligand>
        <name>L-citrulline</name>
        <dbReference type="ChEBI" id="CHEBI:57743"/>
    </ligand>
</feature>
<feature type="binding site" evidence="1">
    <location>
        <position position="264"/>
    </location>
    <ligand>
        <name>L-citrulline</name>
        <dbReference type="ChEBI" id="CHEBI:57743"/>
    </ligand>
</feature>
<feature type="binding site" evidence="1">
    <location>
        <position position="276"/>
    </location>
    <ligand>
        <name>L-citrulline</name>
        <dbReference type="ChEBI" id="CHEBI:57743"/>
    </ligand>
</feature>
<sequence>MAKKEVKKIVLAYSGGLDTSIILKWLKNEYGCEVITFSADLGQGDELTPIRDKAFATGADKVYIDDLREEFVRDFVFPMFRANAIYEGHYLLGTSIARPLIAKRQMEIAKIEGADAVSHGATGKGNDQVRFELGYYHFNPAITVIAPWRDWKLNSRQALINYAKKNDIPIPVTKKRPWSSDRNLLHISFEGAILEDTWAEAPENMYVLTKSPEKAPNKPQYVEIEFRNGNAVAVDGEAMSPAQLLAHLNFIGGEHGIGRVDLLENRSVGMKSRGVYETPGGTILREAHMAVEQITMDREVMHLRDSLIPRYAEMVYNGYWFSPEREMLQTMIDESQKTVNGVARVKLYKGHCRTVGRKSETDSLFNLDFATFEKDQVYNQKDAEGFIKLNSLRLRIRSLMQAAKKK</sequence>
<keyword id="KW-0028">Amino-acid biosynthesis</keyword>
<keyword id="KW-0055">Arginine biosynthesis</keyword>
<keyword id="KW-0067">ATP-binding</keyword>
<keyword id="KW-0963">Cytoplasm</keyword>
<keyword id="KW-0436">Ligase</keyword>
<keyword id="KW-0547">Nucleotide-binding</keyword>
<keyword id="KW-1185">Reference proteome</keyword>
<protein>
    <recommendedName>
        <fullName evidence="1">Argininosuccinate synthase</fullName>
        <ecNumber evidence="1">6.3.4.5</ecNumber>
    </recommendedName>
    <alternativeName>
        <fullName evidence="1">Citrulline--aspartate ligase</fullName>
    </alternativeName>
</protein>
<dbReference type="EC" id="6.3.4.5" evidence="1"/>
<dbReference type="EMBL" id="CP000698">
    <property type="protein sequence ID" value="ABQ24444.1"/>
    <property type="molecule type" value="Genomic_DNA"/>
</dbReference>
<dbReference type="RefSeq" id="WP_011937173.1">
    <property type="nucleotide sequence ID" value="NC_009483.1"/>
</dbReference>
<dbReference type="SMR" id="A5GDA4"/>
<dbReference type="STRING" id="351605.Gura_0228"/>
<dbReference type="KEGG" id="gur:Gura_0228"/>
<dbReference type="HOGENOM" id="CLU_032784_4_2_7"/>
<dbReference type="OrthoDB" id="9801641at2"/>
<dbReference type="UniPathway" id="UPA00068">
    <property type="reaction ID" value="UER00113"/>
</dbReference>
<dbReference type="Proteomes" id="UP000006695">
    <property type="component" value="Chromosome"/>
</dbReference>
<dbReference type="GO" id="GO:0005737">
    <property type="term" value="C:cytoplasm"/>
    <property type="evidence" value="ECO:0007669"/>
    <property type="project" value="UniProtKB-SubCell"/>
</dbReference>
<dbReference type="GO" id="GO:0004055">
    <property type="term" value="F:argininosuccinate synthase activity"/>
    <property type="evidence" value="ECO:0007669"/>
    <property type="project" value="UniProtKB-UniRule"/>
</dbReference>
<dbReference type="GO" id="GO:0005524">
    <property type="term" value="F:ATP binding"/>
    <property type="evidence" value="ECO:0007669"/>
    <property type="project" value="UniProtKB-UniRule"/>
</dbReference>
<dbReference type="GO" id="GO:0000053">
    <property type="term" value="P:argininosuccinate metabolic process"/>
    <property type="evidence" value="ECO:0007669"/>
    <property type="project" value="TreeGrafter"/>
</dbReference>
<dbReference type="GO" id="GO:0006526">
    <property type="term" value="P:L-arginine biosynthetic process"/>
    <property type="evidence" value="ECO:0007669"/>
    <property type="project" value="UniProtKB-UniRule"/>
</dbReference>
<dbReference type="GO" id="GO:0000050">
    <property type="term" value="P:urea cycle"/>
    <property type="evidence" value="ECO:0007669"/>
    <property type="project" value="TreeGrafter"/>
</dbReference>
<dbReference type="CDD" id="cd01999">
    <property type="entry name" value="ASS"/>
    <property type="match status" value="1"/>
</dbReference>
<dbReference type="FunFam" id="3.40.50.620:FF:000019">
    <property type="entry name" value="Argininosuccinate synthase"/>
    <property type="match status" value="1"/>
</dbReference>
<dbReference type="FunFam" id="3.90.1260.10:FF:000007">
    <property type="entry name" value="Argininosuccinate synthase"/>
    <property type="match status" value="1"/>
</dbReference>
<dbReference type="Gene3D" id="3.90.1260.10">
    <property type="entry name" value="Argininosuccinate synthetase, chain A, domain 2"/>
    <property type="match status" value="1"/>
</dbReference>
<dbReference type="Gene3D" id="3.40.50.620">
    <property type="entry name" value="HUPs"/>
    <property type="match status" value="1"/>
</dbReference>
<dbReference type="Gene3D" id="1.20.5.470">
    <property type="entry name" value="Single helix bin"/>
    <property type="match status" value="1"/>
</dbReference>
<dbReference type="HAMAP" id="MF_00005">
    <property type="entry name" value="Arg_succ_synth_type1"/>
    <property type="match status" value="1"/>
</dbReference>
<dbReference type="InterPro" id="IPR048268">
    <property type="entry name" value="Arginosuc_syn_C"/>
</dbReference>
<dbReference type="InterPro" id="IPR048267">
    <property type="entry name" value="Arginosuc_syn_N"/>
</dbReference>
<dbReference type="InterPro" id="IPR001518">
    <property type="entry name" value="Arginosuc_synth"/>
</dbReference>
<dbReference type="InterPro" id="IPR018223">
    <property type="entry name" value="Arginosuc_synth_CS"/>
</dbReference>
<dbReference type="InterPro" id="IPR023434">
    <property type="entry name" value="Arginosuc_synth_type_1_subfam"/>
</dbReference>
<dbReference type="InterPro" id="IPR024074">
    <property type="entry name" value="AS_cat/multimer_dom_body"/>
</dbReference>
<dbReference type="InterPro" id="IPR014729">
    <property type="entry name" value="Rossmann-like_a/b/a_fold"/>
</dbReference>
<dbReference type="NCBIfam" id="TIGR00032">
    <property type="entry name" value="argG"/>
    <property type="match status" value="1"/>
</dbReference>
<dbReference type="NCBIfam" id="NF001770">
    <property type="entry name" value="PRK00509.1"/>
    <property type="match status" value="1"/>
</dbReference>
<dbReference type="PANTHER" id="PTHR11587">
    <property type="entry name" value="ARGININOSUCCINATE SYNTHASE"/>
    <property type="match status" value="1"/>
</dbReference>
<dbReference type="PANTHER" id="PTHR11587:SF2">
    <property type="entry name" value="ARGININOSUCCINATE SYNTHASE"/>
    <property type="match status" value="1"/>
</dbReference>
<dbReference type="Pfam" id="PF20979">
    <property type="entry name" value="Arginosuc_syn_C"/>
    <property type="match status" value="1"/>
</dbReference>
<dbReference type="Pfam" id="PF00764">
    <property type="entry name" value="Arginosuc_synth"/>
    <property type="match status" value="1"/>
</dbReference>
<dbReference type="SUPFAM" id="SSF52402">
    <property type="entry name" value="Adenine nucleotide alpha hydrolases-like"/>
    <property type="match status" value="1"/>
</dbReference>
<dbReference type="SUPFAM" id="SSF69864">
    <property type="entry name" value="Argininosuccinate synthetase, C-terminal domain"/>
    <property type="match status" value="1"/>
</dbReference>
<dbReference type="PROSITE" id="PS00564">
    <property type="entry name" value="ARGININOSUCCIN_SYN_1"/>
    <property type="match status" value="1"/>
</dbReference>
<dbReference type="PROSITE" id="PS00565">
    <property type="entry name" value="ARGININOSUCCIN_SYN_2"/>
    <property type="match status" value="1"/>
</dbReference>
<gene>
    <name evidence="1" type="primary">argG</name>
    <name type="ordered locus">Gura_0228</name>
</gene>
<organism>
    <name type="scientific">Geotalea uraniireducens (strain Rf4)</name>
    <name type="common">Geobacter uraniireducens</name>
    <dbReference type="NCBI Taxonomy" id="351605"/>
    <lineage>
        <taxon>Bacteria</taxon>
        <taxon>Pseudomonadati</taxon>
        <taxon>Thermodesulfobacteriota</taxon>
        <taxon>Desulfuromonadia</taxon>
        <taxon>Geobacterales</taxon>
        <taxon>Geobacteraceae</taxon>
        <taxon>Geotalea</taxon>
    </lineage>
</organism>
<name>ASSY_GEOUR</name>
<proteinExistence type="inferred from homology"/>
<evidence type="ECO:0000255" key="1">
    <source>
        <dbReference type="HAMAP-Rule" id="MF_00005"/>
    </source>
</evidence>